<proteinExistence type="evidence at protein level"/>
<comment type="function">
    <text evidence="1">This protein binds to the 23S rRNA, and is important in its secondary structure. It is located near the subunit interface in the base of the L7/L12 stalk, and near the tRNA binding site of the peptidyltransferase center.</text>
</comment>
<comment type="subunit">
    <text>Part of the 50S ribosomal subunit.</text>
</comment>
<comment type="similarity">
    <text evidence="1">Belongs to the universal ribosomal protein uL6 family.</text>
</comment>
<protein>
    <recommendedName>
        <fullName evidence="1">Large ribosomal subunit protein uL6</fullName>
    </recommendedName>
    <alternativeName>
        <fullName evidence="3">50S ribosomal protein L6</fullName>
    </alternativeName>
</protein>
<evidence type="ECO:0000255" key="1">
    <source>
        <dbReference type="HAMAP-Rule" id="MF_01365"/>
    </source>
</evidence>
<evidence type="ECO:0000269" key="2">
    <source>
    </source>
</evidence>
<evidence type="ECO:0000305" key="3"/>
<dbReference type="EMBL" id="X90765">
    <property type="protein sequence ID" value="CAA62288.1"/>
    <property type="molecule type" value="Genomic_DNA"/>
</dbReference>
<dbReference type="PIR" id="S15442">
    <property type="entry name" value="S15442"/>
</dbReference>
<dbReference type="RefSeq" id="WP_011173704.1">
    <property type="nucleotide sequence ID" value="NZ_DFSU01000131.1"/>
</dbReference>
<dbReference type="SMR" id="P24316"/>
<dbReference type="GeneID" id="3169807"/>
<dbReference type="OMA" id="RERHGLC"/>
<dbReference type="GO" id="GO:0022625">
    <property type="term" value="C:cytosolic large ribosomal subunit"/>
    <property type="evidence" value="ECO:0007669"/>
    <property type="project" value="TreeGrafter"/>
</dbReference>
<dbReference type="GO" id="GO:0019843">
    <property type="term" value="F:rRNA binding"/>
    <property type="evidence" value="ECO:0007669"/>
    <property type="project" value="UniProtKB-UniRule"/>
</dbReference>
<dbReference type="GO" id="GO:0003735">
    <property type="term" value="F:structural constituent of ribosome"/>
    <property type="evidence" value="ECO:0007669"/>
    <property type="project" value="InterPro"/>
</dbReference>
<dbReference type="GO" id="GO:0002181">
    <property type="term" value="P:cytoplasmic translation"/>
    <property type="evidence" value="ECO:0007669"/>
    <property type="project" value="TreeGrafter"/>
</dbReference>
<dbReference type="FunFam" id="3.90.930.12:FF:000001">
    <property type="entry name" value="50S ribosomal protein L6"/>
    <property type="match status" value="1"/>
</dbReference>
<dbReference type="FunFam" id="3.90.930.12:FF:000002">
    <property type="entry name" value="50S ribosomal protein L6"/>
    <property type="match status" value="1"/>
</dbReference>
<dbReference type="Gene3D" id="3.90.930.12">
    <property type="entry name" value="Ribosomal protein L6, alpha-beta domain"/>
    <property type="match status" value="2"/>
</dbReference>
<dbReference type="HAMAP" id="MF_01365_B">
    <property type="entry name" value="Ribosomal_uL6_B"/>
    <property type="match status" value="1"/>
</dbReference>
<dbReference type="InterPro" id="IPR000702">
    <property type="entry name" value="Ribosomal_uL6-like"/>
</dbReference>
<dbReference type="InterPro" id="IPR036789">
    <property type="entry name" value="Ribosomal_uL6-like_a/b-dom_sf"/>
</dbReference>
<dbReference type="InterPro" id="IPR020040">
    <property type="entry name" value="Ribosomal_uL6_a/b-dom"/>
</dbReference>
<dbReference type="InterPro" id="IPR019906">
    <property type="entry name" value="Ribosomal_uL6_bac-type"/>
</dbReference>
<dbReference type="NCBIfam" id="TIGR03654">
    <property type="entry name" value="L6_bact"/>
    <property type="match status" value="1"/>
</dbReference>
<dbReference type="PANTHER" id="PTHR11655">
    <property type="entry name" value="60S/50S RIBOSOMAL PROTEIN L6/L9"/>
    <property type="match status" value="1"/>
</dbReference>
<dbReference type="PANTHER" id="PTHR11655:SF14">
    <property type="entry name" value="LARGE RIBOSOMAL SUBUNIT PROTEIN UL6M"/>
    <property type="match status" value="1"/>
</dbReference>
<dbReference type="Pfam" id="PF00347">
    <property type="entry name" value="Ribosomal_L6"/>
    <property type="match status" value="2"/>
</dbReference>
<dbReference type="PIRSF" id="PIRSF002162">
    <property type="entry name" value="Ribosomal_L6"/>
    <property type="match status" value="1"/>
</dbReference>
<dbReference type="PRINTS" id="PR00059">
    <property type="entry name" value="RIBOSOMALL6"/>
</dbReference>
<dbReference type="SUPFAM" id="SSF56053">
    <property type="entry name" value="Ribosomal protein L6"/>
    <property type="match status" value="2"/>
</dbReference>
<name>RL6_THETH</name>
<organism>
    <name type="scientific">Thermus thermophilus</name>
    <dbReference type="NCBI Taxonomy" id="274"/>
    <lineage>
        <taxon>Bacteria</taxon>
        <taxon>Thermotogati</taxon>
        <taxon>Deinococcota</taxon>
        <taxon>Deinococci</taxon>
        <taxon>Thermales</taxon>
        <taxon>Thermaceae</taxon>
        <taxon>Thermus</taxon>
    </lineage>
</organism>
<accession>P24316</accession>
<accession>P74908</accession>
<reference key="1">
    <citation type="journal article" date="1997" name="Gene">
        <title>Sequencing and analysis of the Thermus thermophilus ribosomal protein gene cluster equivalent to the spectinomycin operon.</title>
        <authorList>
            <person name="Vysotskaya V.S."/>
            <person name="Shcherbakov D.V."/>
            <person name="Garber M.B."/>
        </authorList>
    </citation>
    <scope>NUCLEOTIDE SEQUENCE [GENOMIC DNA]</scope>
    <source>
        <strain>VK1</strain>
    </source>
</reference>
<reference key="2">
    <citation type="journal article" date="1992" name="Biochimie">
        <title>Ribosomal proteins from Thermus thermophilus for structural investigations.</title>
        <authorList>
            <person name="Garber M.B."/>
            <person name="Agalarov S.C."/>
            <person name="Eliseikina I.A."/>
            <person name="Fomenkova N.P."/>
            <person name="Nikonov S.V."/>
            <person name="Sedelnikova S.E."/>
            <person name="Shikaeva O.S."/>
            <person name="Vasiliev D."/>
            <person name="Zhdanov A.S."/>
            <person name="Liljas A."/>
            <person name="Svensson L.A."/>
        </authorList>
    </citation>
    <scope>PROTEIN SEQUENCE OF 2-26</scope>
    <source>
        <strain>VK1</strain>
    </source>
</reference>
<keyword id="KW-0903">Direct protein sequencing</keyword>
<keyword id="KW-0687">Ribonucleoprotein</keyword>
<keyword id="KW-0689">Ribosomal protein</keyword>
<keyword id="KW-0694">RNA-binding</keyword>
<keyword id="KW-0699">rRNA-binding</keyword>
<feature type="initiator methionine" description="Removed" evidence="2">
    <location>
        <position position="1"/>
    </location>
</feature>
<feature type="chain" id="PRO_0000131073" description="Large ribosomal subunit protein uL6">
    <location>
        <begin position="2"/>
        <end position="180"/>
    </location>
</feature>
<feature type="sequence conflict" description="In Ref. 2; AA sequence." evidence="3" ref="2">
    <original>S</original>
    <variation>D</variation>
    <location>
        <position position="2"/>
    </location>
</feature>
<gene>
    <name evidence="1" type="primary">rplF</name>
    <name evidence="1" type="synonym">rpl6</name>
</gene>
<sequence>MSRIGRLPIPVPKGVSVEVAPGRVKVKGPKGELEVPVSPEMRVVVEEGVVRVERPSDERRHKSLHGLTRTLIANAVKGVSEGYSKELLIKGIGYRARLVGRALELTVGFSHPVVVEPPEGITFEVPEPTRVRVSGIDKQKVGQVAANIRAIRKPSAYHEKGIYYAGEPVRLKPGKAGAKK</sequence>